<gene>
    <name type="primary">bna5-2</name>
    <name type="ORF">An04g07200</name>
</gene>
<comment type="function">
    <text evidence="1">Catalyzes the cleavage of L-kynurenine (L-Kyn) and L-3-hydroxykynurenine (L-3OHKyn) into anthranilic acid (AA) and 3-hydroxyanthranilic acid (3-OHAA), respectively.</text>
</comment>
<comment type="catalytic activity">
    <reaction evidence="1">
        <text>L-kynurenine + H2O = anthranilate + L-alanine + H(+)</text>
        <dbReference type="Rhea" id="RHEA:16813"/>
        <dbReference type="ChEBI" id="CHEBI:15377"/>
        <dbReference type="ChEBI" id="CHEBI:15378"/>
        <dbReference type="ChEBI" id="CHEBI:16567"/>
        <dbReference type="ChEBI" id="CHEBI:57959"/>
        <dbReference type="ChEBI" id="CHEBI:57972"/>
        <dbReference type="EC" id="3.7.1.3"/>
    </reaction>
</comment>
<comment type="catalytic activity">
    <reaction evidence="1">
        <text>3-hydroxy-L-kynurenine + H2O = 3-hydroxyanthranilate + L-alanine + H(+)</text>
        <dbReference type="Rhea" id="RHEA:25143"/>
        <dbReference type="ChEBI" id="CHEBI:15377"/>
        <dbReference type="ChEBI" id="CHEBI:15378"/>
        <dbReference type="ChEBI" id="CHEBI:36559"/>
        <dbReference type="ChEBI" id="CHEBI:57972"/>
        <dbReference type="ChEBI" id="CHEBI:58125"/>
        <dbReference type="EC" id="3.7.1.3"/>
    </reaction>
</comment>
<comment type="cofactor">
    <cofactor evidence="1">
        <name>pyridoxal 5'-phosphate</name>
        <dbReference type="ChEBI" id="CHEBI:597326"/>
    </cofactor>
</comment>
<comment type="pathway">
    <text evidence="1">Amino-acid degradation; L-kynurenine degradation; L-alanine and anthranilate from L-kynurenine: step 1/1.</text>
</comment>
<comment type="pathway">
    <text evidence="1">Cofactor biosynthesis; NAD(+) biosynthesis; quinolinate from L-kynurenine: step 2/3.</text>
</comment>
<comment type="subunit">
    <text evidence="1">Homodimer.</text>
</comment>
<comment type="subcellular location">
    <subcellularLocation>
        <location evidence="1">Cytoplasm</location>
    </subcellularLocation>
</comment>
<comment type="similarity">
    <text evidence="1">Belongs to the kynureninase family.</text>
</comment>
<name>KYNU2_ASPNC</name>
<feature type="chain" id="PRO_0000356968" description="Kynureninase 2">
    <location>
        <begin position="1"/>
        <end position="463"/>
    </location>
</feature>
<feature type="binding site" evidence="1">
    <location>
        <position position="134"/>
    </location>
    <ligand>
        <name>pyridoxal 5'-phosphate</name>
        <dbReference type="ChEBI" id="CHEBI:597326"/>
    </ligand>
</feature>
<feature type="binding site" evidence="1">
    <location>
        <position position="135"/>
    </location>
    <ligand>
        <name>pyridoxal 5'-phosphate</name>
        <dbReference type="ChEBI" id="CHEBI:597326"/>
    </ligand>
</feature>
<feature type="binding site" evidence="1">
    <location>
        <begin position="162"/>
        <end position="165"/>
    </location>
    <ligand>
        <name>pyridoxal 5'-phosphate</name>
        <dbReference type="ChEBI" id="CHEBI:597326"/>
    </ligand>
</feature>
<feature type="binding site" evidence="1">
    <location>
        <position position="247"/>
    </location>
    <ligand>
        <name>pyridoxal 5'-phosphate</name>
        <dbReference type="ChEBI" id="CHEBI:597326"/>
    </ligand>
</feature>
<feature type="binding site" evidence="1">
    <location>
        <position position="250"/>
    </location>
    <ligand>
        <name>pyridoxal 5'-phosphate</name>
        <dbReference type="ChEBI" id="CHEBI:597326"/>
    </ligand>
</feature>
<feature type="binding site" evidence="1">
    <location>
        <position position="272"/>
    </location>
    <ligand>
        <name>pyridoxal 5'-phosphate</name>
        <dbReference type="ChEBI" id="CHEBI:597326"/>
    </ligand>
</feature>
<feature type="binding site" evidence="1">
    <location>
        <position position="312"/>
    </location>
    <ligand>
        <name>pyridoxal 5'-phosphate</name>
        <dbReference type="ChEBI" id="CHEBI:597326"/>
    </ligand>
</feature>
<feature type="binding site" evidence="1">
    <location>
        <position position="340"/>
    </location>
    <ligand>
        <name>pyridoxal 5'-phosphate</name>
        <dbReference type="ChEBI" id="CHEBI:597326"/>
    </ligand>
</feature>
<feature type="modified residue" description="N6-(pyridoxal phosphate)lysine" evidence="1">
    <location>
        <position position="273"/>
    </location>
</feature>
<accession>A2QJI5</accession>
<reference key="1">
    <citation type="journal article" date="2007" name="Nat. Biotechnol.">
        <title>Genome sequencing and analysis of the versatile cell factory Aspergillus niger CBS 513.88.</title>
        <authorList>
            <person name="Pel H.J."/>
            <person name="de Winde J.H."/>
            <person name="Archer D.B."/>
            <person name="Dyer P.S."/>
            <person name="Hofmann G."/>
            <person name="Schaap P.J."/>
            <person name="Turner G."/>
            <person name="de Vries R.P."/>
            <person name="Albang R."/>
            <person name="Albermann K."/>
            <person name="Andersen M.R."/>
            <person name="Bendtsen J.D."/>
            <person name="Benen J.A.E."/>
            <person name="van den Berg M."/>
            <person name="Breestraat S."/>
            <person name="Caddick M.X."/>
            <person name="Contreras R."/>
            <person name="Cornell M."/>
            <person name="Coutinho P.M."/>
            <person name="Danchin E.G.J."/>
            <person name="Debets A.J.M."/>
            <person name="Dekker P."/>
            <person name="van Dijck P.W.M."/>
            <person name="van Dijk A."/>
            <person name="Dijkhuizen L."/>
            <person name="Driessen A.J.M."/>
            <person name="d'Enfert C."/>
            <person name="Geysens S."/>
            <person name="Goosen C."/>
            <person name="Groot G.S.P."/>
            <person name="de Groot P.W.J."/>
            <person name="Guillemette T."/>
            <person name="Henrissat B."/>
            <person name="Herweijer M."/>
            <person name="van den Hombergh J.P.T.W."/>
            <person name="van den Hondel C.A.M.J.J."/>
            <person name="van der Heijden R.T.J.M."/>
            <person name="van der Kaaij R.M."/>
            <person name="Klis F.M."/>
            <person name="Kools H.J."/>
            <person name="Kubicek C.P."/>
            <person name="van Kuyk P.A."/>
            <person name="Lauber J."/>
            <person name="Lu X."/>
            <person name="van der Maarel M.J.E.C."/>
            <person name="Meulenberg R."/>
            <person name="Menke H."/>
            <person name="Mortimer M.A."/>
            <person name="Nielsen J."/>
            <person name="Oliver S.G."/>
            <person name="Olsthoorn M."/>
            <person name="Pal K."/>
            <person name="van Peij N.N.M.E."/>
            <person name="Ram A.F.J."/>
            <person name="Rinas U."/>
            <person name="Roubos J.A."/>
            <person name="Sagt C.M.J."/>
            <person name="Schmoll M."/>
            <person name="Sun J."/>
            <person name="Ussery D."/>
            <person name="Varga J."/>
            <person name="Vervecken W."/>
            <person name="van de Vondervoort P.J.J."/>
            <person name="Wedler H."/>
            <person name="Woesten H.A.B."/>
            <person name="Zeng A.-P."/>
            <person name="van Ooyen A.J.J."/>
            <person name="Visser J."/>
            <person name="Stam H."/>
        </authorList>
    </citation>
    <scope>NUCLEOTIDE SEQUENCE [LARGE SCALE GENOMIC DNA]</scope>
    <source>
        <strain>ATCC MYA-4892 / CBS 513.88 / FGSC A1513</strain>
    </source>
</reference>
<dbReference type="EC" id="3.7.1.3" evidence="1"/>
<dbReference type="EMBL" id="AM270081">
    <property type="protein sequence ID" value="CAK44720.1"/>
    <property type="molecule type" value="Genomic_DNA"/>
</dbReference>
<dbReference type="RefSeq" id="XP_001402081.1">
    <property type="nucleotide sequence ID" value="XM_001402044.2"/>
</dbReference>
<dbReference type="SMR" id="A2QJI5"/>
<dbReference type="EnsemblFungi" id="CAK44720">
    <property type="protein sequence ID" value="CAK44720"/>
    <property type="gene ID" value="An04g07200"/>
</dbReference>
<dbReference type="GeneID" id="4991124"/>
<dbReference type="KEGG" id="ang:An04g07200"/>
<dbReference type="VEuPathDB" id="FungiDB:An04g07200"/>
<dbReference type="HOGENOM" id="CLU_003433_4_0_1"/>
<dbReference type="UniPathway" id="UPA00253">
    <property type="reaction ID" value="UER00329"/>
</dbReference>
<dbReference type="UniPathway" id="UPA00334">
    <property type="reaction ID" value="UER00455"/>
</dbReference>
<dbReference type="Proteomes" id="UP000006706">
    <property type="component" value="Chromosome 6L"/>
</dbReference>
<dbReference type="GO" id="GO:0005737">
    <property type="term" value="C:cytoplasm"/>
    <property type="evidence" value="ECO:0007669"/>
    <property type="project" value="UniProtKB-SubCell"/>
</dbReference>
<dbReference type="GO" id="GO:0030429">
    <property type="term" value="F:kynureninase activity"/>
    <property type="evidence" value="ECO:0007669"/>
    <property type="project" value="UniProtKB-UniRule"/>
</dbReference>
<dbReference type="GO" id="GO:0030170">
    <property type="term" value="F:pyridoxal phosphate binding"/>
    <property type="evidence" value="ECO:0007669"/>
    <property type="project" value="UniProtKB-UniRule"/>
</dbReference>
<dbReference type="GO" id="GO:0034354">
    <property type="term" value="P:'de novo' NAD biosynthetic process from L-tryptophan"/>
    <property type="evidence" value="ECO:0007669"/>
    <property type="project" value="UniProtKB-UniRule"/>
</dbReference>
<dbReference type="GO" id="GO:0043420">
    <property type="term" value="P:anthranilate metabolic process"/>
    <property type="evidence" value="ECO:0007669"/>
    <property type="project" value="UniProtKB-UniRule"/>
</dbReference>
<dbReference type="GO" id="GO:0097053">
    <property type="term" value="P:L-kynurenine catabolic process"/>
    <property type="evidence" value="ECO:0007669"/>
    <property type="project" value="UniProtKB-UniRule"/>
</dbReference>
<dbReference type="GO" id="GO:0019441">
    <property type="term" value="P:L-tryptophan catabolic process to kynurenine"/>
    <property type="evidence" value="ECO:0007669"/>
    <property type="project" value="TreeGrafter"/>
</dbReference>
<dbReference type="GO" id="GO:0019805">
    <property type="term" value="P:quinolinate biosynthetic process"/>
    <property type="evidence" value="ECO:0007669"/>
    <property type="project" value="UniProtKB-UniRule"/>
</dbReference>
<dbReference type="FunFam" id="3.40.640.10:FF:000031">
    <property type="entry name" value="Kynureninase"/>
    <property type="match status" value="1"/>
</dbReference>
<dbReference type="Gene3D" id="3.90.1150.10">
    <property type="entry name" value="Aspartate Aminotransferase, domain 1"/>
    <property type="match status" value="1"/>
</dbReference>
<dbReference type="Gene3D" id="3.40.640.10">
    <property type="entry name" value="Type I PLP-dependent aspartate aminotransferase-like (Major domain)"/>
    <property type="match status" value="1"/>
</dbReference>
<dbReference type="HAMAP" id="MF_01970">
    <property type="entry name" value="Kynureninase"/>
    <property type="match status" value="1"/>
</dbReference>
<dbReference type="InterPro" id="IPR010111">
    <property type="entry name" value="Kynureninase"/>
</dbReference>
<dbReference type="InterPro" id="IPR015424">
    <property type="entry name" value="PyrdxlP-dep_Trfase"/>
</dbReference>
<dbReference type="InterPro" id="IPR015421">
    <property type="entry name" value="PyrdxlP-dep_Trfase_major"/>
</dbReference>
<dbReference type="InterPro" id="IPR015422">
    <property type="entry name" value="PyrdxlP-dep_Trfase_small"/>
</dbReference>
<dbReference type="NCBIfam" id="TIGR01814">
    <property type="entry name" value="kynureninase"/>
    <property type="match status" value="1"/>
</dbReference>
<dbReference type="PANTHER" id="PTHR14084">
    <property type="entry name" value="KYNURENINASE"/>
    <property type="match status" value="1"/>
</dbReference>
<dbReference type="PANTHER" id="PTHR14084:SF2">
    <property type="entry name" value="KYNURENINASE 2"/>
    <property type="match status" value="1"/>
</dbReference>
<dbReference type="Pfam" id="PF22580">
    <property type="entry name" value="KYNU_C"/>
    <property type="match status" value="1"/>
</dbReference>
<dbReference type="PIRSF" id="PIRSF038800">
    <property type="entry name" value="KYNU"/>
    <property type="match status" value="1"/>
</dbReference>
<dbReference type="SUPFAM" id="SSF53383">
    <property type="entry name" value="PLP-dependent transferases"/>
    <property type="match status" value="1"/>
</dbReference>
<organism>
    <name type="scientific">Aspergillus niger (strain ATCC MYA-4892 / CBS 513.88 / FGSC A1513)</name>
    <dbReference type="NCBI Taxonomy" id="425011"/>
    <lineage>
        <taxon>Eukaryota</taxon>
        <taxon>Fungi</taxon>
        <taxon>Dikarya</taxon>
        <taxon>Ascomycota</taxon>
        <taxon>Pezizomycotina</taxon>
        <taxon>Eurotiomycetes</taxon>
        <taxon>Eurotiomycetidae</taxon>
        <taxon>Eurotiales</taxon>
        <taxon>Aspergillaceae</taxon>
        <taxon>Aspergillus</taxon>
        <taxon>Aspergillus subgen. Circumdati</taxon>
    </lineage>
</organism>
<sequence>MSKSNGVSLAFPAEAATKEYAASLDSSDRLAAFREKFIVPSKANIASKKLAKPGLSPESCIYFCGNSLGIQPKATAKYLEAQLDTWSSIGVGGHFTDLEGSPLKQWQLLSEQAADSMSKIVGAKPEEVAAMGTLTTNLHLLLASFYKPTQTKHKILMDWKAFPSDHYAIESHIAWHDLDPKESMVLIGPDEGEYEISTQKIFSYIDKHADEAAMILLPGIQYYTGQLFDIQKITKYAHSRNMVVGWDLAHAFANVELKLHDWNVDFAAWCTYKYGNAGPGAMGGLFVHEQHGEVDYSAGEDAPKFRHRLTGWYGGDRSVRFKMDNKFKPIPGAGGFQISNPSAIDLACLCAALSVFDETSMADLRRKSLKLTAYLEFLLLRDYEEESRPFSIITPKDPEARGAQLSLLLKPGLLQNVAQKLQEAGIVCDKREPGVVRVAPVPLYNSFSEVWTFVKIFKDALQQ</sequence>
<keyword id="KW-0963">Cytoplasm</keyword>
<keyword id="KW-0378">Hydrolase</keyword>
<keyword id="KW-0662">Pyridine nucleotide biosynthesis</keyword>
<keyword id="KW-0663">Pyridoxal phosphate</keyword>
<keyword id="KW-1185">Reference proteome</keyword>
<evidence type="ECO:0000255" key="1">
    <source>
        <dbReference type="HAMAP-Rule" id="MF_03017"/>
    </source>
</evidence>
<protein>
    <recommendedName>
        <fullName evidence="1">Kynureninase 2</fullName>
        <ecNumber evidence="1">3.7.1.3</ecNumber>
    </recommendedName>
    <alternativeName>
        <fullName evidence="1">Biosynthesis of nicotinic acid protein 5-2</fullName>
    </alternativeName>
    <alternativeName>
        <fullName evidence="1">L-kynurenine hydrolase 2</fullName>
    </alternativeName>
</protein>
<proteinExistence type="inferred from homology"/>